<accession>O67520</accession>
<comment type="function">
    <text evidence="1">Catalyzes the decarboxylation of orotidine 5'-monophosphate (OMP) to uridine 5'-monophosphate (UMP).</text>
</comment>
<comment type="catalytic activity">
    <reaction evidence="1">
        <text>orotidine 5'-phosphate + H(+) = UMP + CO2</text>
        <dbReference type="Rhea" id="RHEA:11596"/>
        <dbReference type="ChEBI" id="CHEBI:15378"/>
        <dbReference type="ChEBI" id="CHEBI:16526"/>
        <dbReference type="ChEBI" id="CHEBI:57538"/>
        <dbReference type="ChEBI" id="CHEBI:57865"/>
        <dbReference type="EC" id="4.1.1.23"/>
    </reaction>
</comment>
<comment type="pathway">
    <text evidence="1">Pyrimidine metabolism; UMP biosynthesis via de novo pathway; UMP from orotate: step 2/2.</text>
</comment>
<comment type="subunit">
    <text evidence="1">Homodimer.</text>
</comment>
<comment type="similarity">
    <text evidence="1">Belongs to the OMP decarboxylase family. Type 1 subfamily.</text>
</comment>
<feature type="chain" id="PRO_0000134522" description="Orotidine 5'-phosphate decarboxylase">
    <location>
        <begin position="1"/>
        <end position="231"/>
    </location>
</feature>
<feature type="active site" description="Proton donor" evidence="1">
    <location>
        <position position="64"/>
    </location>
</feature>
<feature type="binding site" evidence="1">
    <location>
        <position position="9"/>
    </location>
    <ligand>
        <name>substrate</name>
    </ligand>
</feature>
<feature type="binding site" evidence="1">
    <location>
        <position position="34"/>
    </location>
    <ligand>
        <name>substrate</name>
    </ligand>
</feature>
<feature type="binding site" evidence="1">
    <location>
        <begin position="62"/>
        <end position="71"/>
    </location>
    <ligand>
        <name>substrate</name>
    </ligand>
</feature>
<feature type="binding site" evidence="1">
    <location>
        <position position="117"/>
    </location>
    <ligand>
        <name>substrate</name>
    </ligand>
</feature>
<feature type="binding site" evidence="1">
    <location>
        <position position="179"/>
    </location>
    <ligand>
        <name>substrate</name>
    </ligand>
</feature>
<feature type="binding site" evidence="1">
    <location>
        <position position="188"/>
    </location>
    <ligand>
        <name>substrate</name>
    </ligand>
</feature>
<feature type="binding site" evidence="1">
    <location>
        <position position="208"/>
    </location>
    <ligand>
        <name>substrate</name>
    </ligand>
</feature>
<feature type="binding site" evidence="1">
    <location>
        <position position="209"/>
    </location>
    <ligand>
        <name>substrate</name>
    </ligand>
</feature>
<proteinExistence type="inferred from homology"/>
<dbReference type="EC" id="4.1.1.23" evidence="1"/>
<dbReference type="EMBL" id="AE000657">
    <property type="protein sequence ID" value="AAC07482.1"/>
    <property type="molecule type" value="Genomic_DNA"/>
</dbReference>
<dbReference type="PIR" id="F70436">
    <property type="entry name" value="F70436"/>
</dbReference>
<dbReference type="RefSeq" id="NP_214085.1">
    <property type="nucleotide sequence ID" value="NC_000918.1"/>
</dbReference>
<dbReference type="RefSeq" id="WP_010881023.1">
    <property type="nucleotide sequence ID" value="NC_000918.1"/>
</dbReference>
<dbReference type="SMR" id="O67520"/>
<dbReference type="FunCoup" id="O67520">
    <property type="interactions" value="326"/>
</dbReference>
<dbReference type="STRING" id="224324.aq_1580"/>
<dbReference type="EnsemblBacteria" id="AAC07482">
    <property type="protein sequence ID" value="AAC07482"/>
    <property type="gene ID" value="aq_1580"/>
</dbReference>
<dbReference type="KEGG" id="aae:aq_1580"/>
<dbReference type="PATRIC" id="fig|224324.8.peg.1219"/>
<dbReference type="eggNOG" id="COG0284">
    <property type="taxonomic scope" value="Bacteria"/>
</dbReference>
<dbReference type="HOGENOM" id="CLU_067069_1_0_0"/>
<dbReference type="InParanoid" id="O67520"/>
<dbReference type="OrthoDB" id="9806203at2"/>
<dbReference type="UniPathway" id="UPA00070">
    <property type="reaction ID" value="UER00120"/>
</dbReference>
<dbReference type="Proteomes" id="UP000000798">
    <property type="component" value="Chromosome"/>
</dbReference>
<dbReference type="GO" id="GO:0005829">
    <property type="term" value="C:cytosol"/>
    <property type="evidence" value="ECO:0000318"/>
    <property type="project" value="GO_Central"/>
</dbReference>
<dbReference type="GO" id="GO:0004590">
    <property type="term" value="F:orotidine-5'-phosphate decarboxylase activity"/>
    <property type="evidence" value="ECO:0000318"/>
    <property type="project" value="GO_Central"/>
</dbReference>
<dbReference type="GO" id="GO:0006207">
    <property type="term" value="P:'de novo' pyrimidine nucleobase biosynthetic process"/>
    <property type="evidence" value="ECO:0000318"/>
    <property type="project" value="GO_Central"/>
</dbReference>
<dbReference type="GO" id="GO:0044205">
    <property type="term" value="P:'de novo' UMP biosynthetic process"/>
    <property type="evidence" value="ECO:0007669"/>
    <property type="project" value="UniProtKB-UniRule"/>
</dbReference>
<dbReference type="CDD" id="cd04725">
    <property type="entry name" value="OMP_decarboxylase_like"/>
    <property type="match status" value="1"/>
</dbReference>
<dbReference type="Gene3D" id="3.20.20.70">
    <property type="entry name" value="Aldolase class I"/>
    <property type="match status" value="1"/>
</dbReference>
<dbReference type="HAMAP" id="MF_01200_B">
    <property type="entry name" value="OMPdecase_type1_B"/>
    <property type="match status" value="1"/>
</dbReference>
<dbReference type="InterPro" id="IPR013785">
    <property type="entry name" value="Aldolase_TIM"/>
</dbReference>
<dbReference type="InterPro" id="IPR014732">
    <property type="entry name" value="OMPdecase"/>
</dbReference>
<dbReference type="InterPro" id="IPR047596">
    <property type="entry name" value="OMPdecase_bac"/>
</dbReference>
<dbReference type="InterPro" id="IPR001754">
    <property type="entry name" value="OMPdeCOase_dom"/>
</dbReference>
<dbReference type="InterPro" id="IPR011060">
    <property type="entry name" value="RibuloseP-bd_barrel"/>
</dbReference>
<dbReference type="NCBIfam" id="NF001273">
    <property type="entry name" value="PRK00230.1"/>
    <property type="match status" value="1"/>
</dbReference>
<dbReference type="NCBIfam" id="TIGR01740">
    <property type="entry name" value="pyrF"/>
    <property type="match status" value="1"/>
</dbReference>
<dbReference type="PANTHER" id="PTHR32119">
    <property type="entry name" value="OROTIDINE 5'-PHOSPHATE DECARBOXYLASE"/>
    <property type="match status" value="1"/>
</dbReference>
<dbReference type="PANTHER" id="PTHR32119:SF2">
    <property type="entry name" value="OROTIDINE 5'-PHOSPHATE DECARBOXYLASE"/>
    <property type="match status" value="1"/>
</dbReference>
<dbReference type="Pfam" id="PF00215">
    <property type="entry name" value="OMPdecase"/>
    <property type="match status" value="1"/>
</dbReference>
<dbReference type="SMART" id="SM00934">
    <property type="entry name" value="OMPdecase"/>
    <property type="match status" value="1"/>
</dbReference>
<dbReference type="SUPFAM" id="SSF51366">
    <property type="entry name" value="Ribulose-phoshate binding barrel"/>
    <property type="match status" value="1"/>
</dbReference>
<gene>
    <name evidence="1" type="primary">pyrF</name>
    <name type="ordered locus">aq_1580</name>
</gene>
<protein>
    <recommendedName>
        <fullName evidence="1">Orotidine 5'-phosphate decarboxylase</fullName>
        <ecNumber evidence="1">4.1.1.23</ecNumber>
    </recommendedName>
    <alternativeName>
        <fullName evidence="1">OMP decarboxylase</fullName>
        <shortName evidence="1">OMPDCase</shortName>
        <shortName evidence="1">OMPdecase</shortName>
    </alternativeName>
</protein>
<evidence type="ECO:0000255" key="1">
    <source>
        <dbReference type="HAMAP-Rule" id="MF_01200"/>
    </source>
</evidence>
<name>PYRF_AQUAE</name>
<reference key="1">
    <citation type="journal article" date="1998" name="Nature">
        <title>The complete genome of the hyperthermophilic bacterium Aquifex aeolicus.</title>
        <authorList>
            <person name="Deckert G."/>
            <person name="Warren P.V."/>
            <person name="Gaasterland T."/>
            <person name="Young W.G."/>
            <person name="Lenox A.L."/>
            <person name="Graham D.E."/>
            <person name="Overbeek R."/>
            <person name="Snead M.A."/>
            <person name="Keller M."/>
            <person name="Aujay M."/>
            <person name="Huber R."/>
            <person name="Feldman R.A."/>
            <person name="Short J.M."/>
            <person name="Olsen G.J."/>
            <person name="Swanson R.V."/>
        </authorList>
    </citation>
    <scope>NUCLEOTIDE SEQUENCE [LARGE SCALE GENOMIC DNA]</scope>
    <source>
        <strain>VF5</strain>
    </source>
</reference>
<keyword id="KW-0210">Decarboxylase</keyword>
<keyword id="KW-0456">Lyase</keyword>
<keyword id="KW-0665">Pyrimidine biosynthesis</keyword>
<keyword id="KW-1185">Reference proteome</keyword>
<sequence>MARICVALDVPWERAIKIVKDLYDFFETYPLILKIGHKIYLEKGGDAVKELKEDFPYEVFLDLKLHDIPSVVGLAVEKISELGTDYTTVHLLGGPEMVKEAVKNKGSMKILGVTILTSHDENYIKFLKSNFEDIKNFTLYLARVGIENGVDGVVCSGEEVEFLKKNIEKDFIAVVPGIRIKKEKRHDQKRVLTPAEAKKRGADVIVIGREITESKNPVYVVERALKMMGEI</sequence>
<organism>
    <name type="scientific">Aquifex aeolicus (strain VF5)</name>
    <dbReference type="NCBI Taxonomy" id="224324"/>
    <lineage>
        <taxon>Bacteria</taxon>
        <taxon>Pseudomonadati</taxon>
        <taxon>Aquificota</taxon>
        <taxon>Aquificia</taxon>
        <taxon>Aquificales</taxon>
        <taxon>Aquificaceae</taxon>
        <taxon>Aquifex</taxon>
    </lineage>
</organism>